<reference key="1">
    <citation type="submission" date="2004-11" db="EMBL/GenBank/DDBJ databases">
        <authorList>
            <consortium name="The German cDNA consortium"/>
        </authorList>
    </citation>
    <scope>NUCLEOTIDE SEQUENCE [LARGE SCALE MRNA]</scope>
    <source>
        <tissue>Brain cortex</tissue>
    </source>
</reference>
<organism>
    <name type="scientific">Pongo abelii</name>
    <name type="common">Sumatran orangutan</name>
    <name type="synonym">Pongo pygmaeus abelii</name>
    <dbReference type="NCBI Taxonomy" id="9601"/>
    <lineage>
        <taxon>Eukaryota</taxon>
        <taxon>Metazoa</taxon>
        <taxon>Chordata</taxon>
        <taxon>Craniata</taxon>
        <taxon>Vertebrata</taxon>
        <taxon>Euteleostomi</taxon>
        <taxon>Mammalia</taxon>
        <taxon>Eutheria</taxon>
        <taxon>Euarchontoglires</taxon>
        <taxon>Primates</taxon>
        <taxon>Haplorrhini</taxon>
        <taxon>Catarrhini</taxon>
        <taxon>Hominidae</taxon>
        <taxon>Pongo</taxon>
    </lineage>
</organism>
<gene>
    <name type="primary">MPPED2</name>
</gene>
<name>MPPD2_PONAB</name>
<sequence length="294" mass="33360">MAHGIPSQGKVTITVDEYSSNPTQAFTHYNINQSRFQPPHVHMVDPIPYDTPKPAGHTRFVCISDTHSRTDGIQMPYGDILLHTGDFTELGLPSEVKKFNDWLGNLPYEYKIVIAGNHELTFDKEFMADLVKQDYYRFPSVSKLKPEDFDNVQSLLTNSIYLQDSEVTVKGFRIYGAPWTPWFNGWGFNLPRGQSLLDKWNLIPEGIDILMTHGPPLGFRDWVPKELQRVGCVELLNTVQRRVRPKLHVFGGIHEGYGIMTDGYTTYINASTCTVSFQPTNPPIIFDLPNPQGS</sequence>
<dbReference type="EC" id="3.1.-.-" evidence="1"/>
<dbReference type="EMBL" id="CR857621">
    <property type="protein sequence ID" value="CAH89896.1"/>
    <property type="molecule type" value="mRNA"/>
</dbReference>
<dbReference type="RefSeq" id="NP_001124887.1">
    <property type="nucleotide sequence ID" value="NM_001131415.1"/>
</dbReference>
<dbReference type="RefSeq" id="XP_009244782.1">
    <property type="nucleotide sequence ID" value="XM_009246507.1"/>
</dbReference>
<dbReference type="RefSeq" id="XP_024110136.1">
    <property type="nucleotide sequence ID" value="XM_024254368.3"/>
</dbReference>
<dbReference type="RefSeq" id="XP_054379542.1">
    <property type="nucleotide sequence ID" value="XM_054523567.2"/>
</dbReference>
<dbReference type="SMR" id="Q5REB1"/>
<dbReference type="FunCoup" id="Q5REB1">
    <property type="interactions" value="213"/>
</dbReference>
<dbReference type="STRING" id="9601.ENSPPYP00000003897"/>
<dbReference type="Ensembl" id="ENSPPYT00000004045.3">
    <property type="protein sequence ID" value="ENSPPYP00000003897.2"/>
    <property type="gene ID" value="ENSPPYG00000003395.3"/>
</dbReference>
<dbReference type="GeneID" id="100171752"/>
<dbReference type="KEGG" id="pon:100171752"/>
<dbReference type="CTD" id="744"/>
<dbReference type="eggNOG" id="KOG3947">
    <property type="taxonomic scope" value="Eukaryota"/>
</dbReference>
<dbReference type="GeneTree" id="ENSGT00390000007681"/>
<dbReference type="HOGENOM" id="CLU_041441_1_0_1"/>
<dbReference type="InParanoid" id="Q5REB1"/>
<dbReference type="OMA" id="HTPPYGI"/>
<dbReference type="OrthoDB" id="630188at2759"/>
<dbReference type="TreeFam" id="TF314305"/>
<dbReference type="Proteomes" id="UP000001595">
    <property type="component" value="Chromosome 11"/>
</dbReference>
<dbReference type="GO" id="GO:0016208">
    <property type="term" value="F:AMP binding"/>
    <property type="evidence" value="ECO:0000250"/>
    <property type="project" value="UniProtKB"/>
</dbReference>
<dbReference type="GO" id="GO:0019002">
    <property type="term" value="F:GMP binding"/>
    <property type="evidence" value="ECO:0000250"/>
    <property type="project" value="UniProtKB"/>
</dbReference>
<dbReference type="GO" id="GO:0030145">
    <property type="term" value="F:manganese ion binding"/>
    <property type="evidence" value="ECO:0000250"/>
    <property type="project" value="UniProtKB"/>
</dbReference>
<dbReference type="GO" id="GO:0008081">
    <property type="term" value="F:phosphoric diester hydrolase activity"/>
    <property type="evidence" value="ECO:0000250"/>
    <property type="project" value="UniProtKB"/>
</dbReference>
<dbReference type="CDD" id="cd07379">
    <property type="entry name" value="MPP_239FB"/>
    <property type="match status" value="1"/>
</dbReference>
<dbReference type="FunFam" id="3.60.21.10:FF:000023">
    <property type="entry name" value="Metallophosphoesterase mpped2"/>
    <property type="match status" value="1"/>
</dbReference>
<dbReference type="Gene3D" id="3.60.21.10">
    <property type="match status" value="1"/>
</dbReference>
<dbReference type="InterPro" id="IPR024201">
    <property type="entry name" value="Calcineurin-like_Pesterase"/>
</dbReference>
<dbReference type="InterPro" id="IPR004843">
    <property type="entry name" value="Calcineurin-like_PHP_ApaH"/>
</dbReference>
<dbReference type="InterPro" id="IPR029052">
    <property type="entry name" value="Metallo-depent_PP-like"/>
</dbReference>
<dbReference type="InterPro" id="IPR051693">
    <property type="entry name" value="UPF0046_metallophosphoest"/>
</dbReference>
<dbReference type="PANTHER" id="PTHR12905">
    <property type="entry name" value="METALLOPHOSPHOESTERASE"/>
    <property type="match status" value="1"/>
</dbReference>
<dbReference type="PANTHER" id="PTHR12905:SF13">
    <property type="entry name" value="METALLOPHOSPHOESTERASE MPPED2"/>
    <property type="match status" value="1"/>
</dbReference>
<dbReference type="Pfam" id="PF00149">
    <property type="entry name" value="Metallophos"/>
    <property type="match status" value="1"/>
</dbReference>
<dbReference type="PIRSF" id="PIRSF035808">
    <property type="entry name" value="Pdiesterase_Brain_239"/>
    <property type="match status" value="1"/>
</dbReference>
<dbReference type="SUPFAM" id="SSF56300">
    <property type="entry name" value="Metallo-dependent phosphatases"/>
    <property type="match status" value="1"/>
</dbReference>
<keyword id="KW-0170">Cobalt</keyword>
<keyword id="KW-0378">Hydrolase</keyword>
<keyword id="KW-0464">Manganese</keyword>
<keyword id="KW-0479">Metal-binding</keyword>
<keyword id="KW-0547">Nucleotide-binding</keyword>
<keyword id="KW-1185">Reference proteome</keyword>
<proteinExistence type="evidence at transcript level"/>
<accession>Q5REB1</accession>
<comment type="function">
    <text evidence="1">Displays low metallophosphoesterase activity (in vitro). May play a role in the development of the nervous system.</text>
</comment>
<comment type="cofactor">
    <cofactor evidence="1">
        <name>Mn(2+)</name>
        <dbReference type="ChEBI" id="CHEBI:29035"/>
    </cofactor>
    <cofactor evidence="1">
        <name>Co(2+)</name>
        <dbReference type="ChEBI" id="CHEBI:48828"/>
    </cofactor>
</comment>
<comment type="activity regulation">
    <text evidence="1">Inhibited by nmolar levels of AMP and GMP.</text>
</comment>
<comment type="subunit">
    <text evidence="1">Homodimer.</text>
</comment>
<comment type="similarity">
    <text evidence="2">Belongs to the UPF0046 family.</text>
</comment>
<feature type="chain" id="PRO_0000053407" description="Metallophosphoesterase MPPED2">
    <location>
        <begin position="1"/>
        <end position="294"/>
    </location>
</feature>
<feature type="binding site" evidence="1">
    <location>
        <position position="65"/>
    </location>
    <ligand>
        <name>Mn(2+)</name>
        <dbReference type="ChEBI" id="CHEBI:29035"/>
        <label>1</label>
    </ligand>
</feature>
<feature type="binding site" evidence="1">
    <location>
        <position position="67"/>
    </location>
    <ligand>
        <name>Mn(2+)</name>
        <dbReference type="ChEBI" id="CHEBI:29035"/>
        <label>1</label>
    </ligand>
</feature>
<feature type="binding site" evidence="1">
    <location>
        <position position="86"/>
    </location>
    <ligand>
        <name>Mn(2+)</name>
        <dbReference type="ChEBI" id="CHEBI:29035"/>
        <label>1</label>
    </ligand>
</feature>
<feature type="binding site" evidence="1">
    <location>
        <position position="86"/>
    </location>
    <ligand>
        <name>Mn(2+)</name>
        <dbReference type="ChEBI" id="CHEBI:29035"/>
        <label>2</label>
    </ligand>
</feature>
<feature type="binding site" evidence="1">
    <location>
        <begin position="117"/>
        <end position="118"/>
    </location>
    <ligand>
        <name>GMP</name>
        <dbReference type="ChEBI" id="CHEBI:58115"/>
    </ligand>
</feature>
<feature type="binding site" evidence="1">
    <location>
        <position position="117"/>
    </location>
    <ligand>
        <name>Mn(2+)</name>
        <dbReference type="ChEBI" id="CHEBI:29035"/>
        <label>2</label>
    </ligand>
</feature>
<feature type="binding site" evidence="1">
    <location>
        <position position="213"/>
    </location>
    <ligand>
        <name>Mn(2+)</name>
        <dbReference type="ChEBI" id="CHEBI:29035"/>
        <label>2</label>
    </ligand>
</feature>
<feature type="binding site" evidence="1">
    <location>
        <begin position="225"/>
        <end position="226"/>
    </location>
    <ligand>
        <name>GMP</name>
        <dbReference type="ChEBI" id="CHEBI:58115"/>
    </ligand>
</feature>
<feature type="binding site" evidence="1">
    <location>
        <begin position="252"/>
        <end position="255"/>
    </location>
    <ligand>
        <name>GMP</name>
        <dbReference type="ChEBI" id="CHEBI:58115"/>
    </ligand>
</feature>
<feature type="binding site" evidence="1">
    <location>
        <position position="254"/>
    </location>
    <ligand>
        <name>Mn(2+)</name>
        <dbReference type="ChEBI" id="CHEBI:29035"/>
        <label>1</label>
    </ligand>
</feature>
<protein>
    <recommendedName>
        <fullName>Metallophosphoesterase MPPED2</fullName>
        <ecNumber evidence="1">3.1.-.-</ecNumber>
    </recommendedName>
    <alternativeName>
        <fullName>Metallophosphoesterase domain-containing protein 2</fullName>
    </alternativeName>
</protein>
<evidence type="ECO:0000250" key="1">
    <source>
        <dbReference type="UniProtKB" id="B1WBP0"/>
    </source>
</evidence>
<evidence type="ECO:0000305" key="2"/>